<dbReference type="EMBL" id="CP001080">
    <property type="protein sequence ID" value="ACD65930.1"/>
    <property type="molecule type" value="Genomic_DNA"/>
</dbReference>
<dbReference type="RefSeq" id="WP_012459019.1">
    <property type="nucleotide sequence ID" value="NC_010730.1"/>
</dbReference>
<dbReference type="SMR" id="B2V7K7"/>
<dbReference type="STRING" id="436114.SYO3AOP1_0285"/>
<dbReference type="KEGG" id="sul:SYO3AOP1_0285"/>
<dbReference type="eggNOG" id="COG0092">
    <property type="taxonomic scope" value="Bacteria"/>
</dbReference>
<dbReference type="HOGENOM" id="CLU_058591_0_2_0"/>
<dbReference type="GO" id="GO:0022627">
    <property type="term" value="C:cytosolic small ribosomal subunit"/>
    <property type="evidence" value="ECO:0007669"/>
    <property type="project" value="TreeGrafter"/>
</dbReference>
<dbReference type="GO" id="GO:0003729">
    <property type="term" value="F:mRNA binding"/>
    <property type="evidence" value="ECO:0007669"/>
    <property type="project" value="UniProtKB-UniRule"/>
</dbReference>
<dbReference type="GO" id="GO:0019843">
    <property type="term" value="F:rRNA binding"/>
    <property type="evidence" value="ECO:0007669"/>
    <property type="project" value="UniProtKB-UniRule"/>
</dbReference>
<dbReference type="GO" id="GO:0003735">
    <property type="term" value="F:structural constituent of ribosome"/>
    <property type="evidence" value="ECO:0007669"/>
    <property type="project" value="InterPro"/>
</dbReference>
<dbReference type="GO" id="GO:0006412">
    <property type="term" value="P:translation"/>
    <property type="evidence" value="ECO:0007669"/>
    <property type="project" value="UniProtKB-UniRule"/>
</dbReference>
<dbReference type="CDD" id="cd02412">
    <property type="entry name" value="KH-II_30S_S3"/>
    <property type="match status" value="1"/>
</dbReference>
<dbReference type="FunFam" id="3.30.300.20:FF:000001">
    <property type="entry name" value="30S ribosomal protein S3"/>
    <property type="match status" value="1"/>
</dbReference>
<dbReference type="Gene3D" id="3.30.300.20">
    <property type="match status" value="1"/>
</dbReference>
<dbReference type="Gene3D" id="3.30.1140.32">
    <property type="entry name" value="Ribosomal protein S3, C-terminal domain"/>
    <property type="match status" value="1"/>
</dbReference>
<dbReference type="HAMAP" id="MF_01309_B">
    <property type="entry name" value="Ribosomal_uS3_B"/>
    <property type="match status" value="1"/>
</dbReference>
<dbReference type="InterPro" id="IPR004087">
    <property type="entry name" value="KH_dom"/>
</dbReference>
<dbReference type="InterPro" id="IPR015946">
    <property type="entry name" value="KH_dom-like_a/b"/>
</dbReference>
<dbReference type="InterPro" id="IPR004044">
    <property type="entry name" value="KH_dom_type_2"/>
</dbReference>
<dbReference type="InterPro" id="IPR009019">
    <property type="entry name" value="KH_sf_prok-type"/>
</dbReference>
<dbReference type="InterPro" id="IPR036419">
    <property type="entry name" value="Ribosomal_S3_C_sf"/>
</dbReference>
<dbReference type="InterPro" id="IPR005704">
    <property type="entry name" value="Ribosomal_uS3_bac-typ"/>
</dbReference>
<dbReference type="InterPro" id="IPR001351">
    <property type="entry name" value="Ribosomal_uS3_C"/>
</dbReference>
<dbReference type="InterPro" id="IPR018280">
    <property type="entry name" value="Ribosomal_uS3_CS"/>
</dbReference>
<dbReference type="NCBIfam" id="TIGR01009">
    <property type="entry name" value="rpsC_bact"/>
    <property type="match status" value="1"/>
</dbReference>
<dbReference type="PANTHER" id="PTHR11760">
    <property type="entry name" value="30S/40S RIBOSOMAL PROTEIN S3"/>
    <property type="match status" value="1"/>
</dbReference>
<dbReference type="PANTHER" id="PTHR11760:SF19">
    <property type="entry name" value="SMALL RIBOSOMAL SUBUNIT PROTEIN US3C"/>
    <property type="match status" value="1"/>
</dbReference>
<dbReference type="Pfam" id="PF07650">
    <property type="entry name" value="KH_2"/>
    <property type="match status" value="1"/>
</dbReference>
<dbReference type="Pfam" id="PF00189">
    <property type="entry name" value="Ribosomal_S3_C"/>
    <property type="match status" value="1"/>
</dbReference>
<dbReference type="SMART" id="SM00322">
    <property type="entry name" value="KH"/>
    <property type="match status" value="1"/>
</dbReference>
<dbReference type="SUPFAM" id="SSF54814">
    <property type="entry name" value="Prokaryotic type KH domain (KH-domain type II)"/>
    <property type="match status" value="1"/>
</dbReference>
<dbReference type="SUPFAM" id="SSF54821">
    <property type="entry name" value="Ribosomal protein S3 C-terminal domain"/>
    <property type="match status" value="1"/>
</dbReference>
<dbReference type="PROSITE" id="PS50823">
    <property type="entry name" value="KH_TYPE_2"/>
    <property type="match status" value="1"/>
</dbReference>
<dbReference type="PROSITE" id="PS00548">
    <property type="entry name" value="RIBOSOMAL_S3"/>
    <property type="match status" value="1"/>
</dbReference>
<protein>
    <recommendedName>
        <fullName evidence="1">Small ribosomal subunit protein uS3</fullName>
    </recommendedName>
    <alternativeName>
        <fullName evidence="2">30S ribosomal protein S3</fullName>
    </alternativeName>
</protein>
<reference key="1">
    <citation type="journal article" date="2009" name="J. Bacteriol.">
        <title>Complete and draft genome sequences of six members of the Aquificales.</title>
        <authorList>
            <person name="Reysenbach A.-L."/>
            <person name="Hamamura N."/>
            <person name="Podar M."/>
            <person name="Griffiths E."/>
            <person name="Ferreira S."/>
            <person name="Hochstein R."/>
            <person name="Heidelberg J."/>
            <person name="Johnson J."/>
            <person name="Mead D."/>
            <person name="Pohorille A."/>
            <person name="Sarmiento M."/>
            <person name="Schweighofer K."/>
            <person name="Seshadri R."/>
            <person name="Voytek M.A."/>
        </authorList>
    </citation>
    <scope>NUCLEOTIDE SEQUENCE [LARGE SCALE GENOMIC DNA]</scope>
    <source>
        <strain>YO3AOP1</strain>
    </source>
</reference>
<name>RS3_SULSY</name>
<comment type="function">
    <text evidence="1">Binds the lower part of the 30S subunit head. Binds mRNA in the 70S ribosome, positioning it for translation.</text>
</comment>
<comment type="subunit">
    <text evidence="1">Part of the 30S ribosomal subunit. Forms a tight complex with proteins S10 and S14.</text>
</comment>
<comment type="similarity">
    <text evidence="1">Belongs to the universal ribosomal protein uS3 family.</text>
</comment>
<organism>
    <name type="scientific">Sulfurihydrogenibium sp. (strain YO3AOP1)</name>
    <dbReference type="NCBI Taxonomy" id="436114"/>
    <lineage>
        <taxon>Bacteria</taxon>
        <taxon>Pseudomonadati</taxon>
        <taxon>Aquificota</taxon>
        <taxon>Aquificia</taxon>
        <taxon>Aquificales</taxon>
        <taxon>Hydrogenothermaceae</taxon>
        <taxon>Sulfurihydrogenibium</taxon>
    </lineage>
</organism>
<sequence length="227" mass="25614">MGQKVHPTGFRLGITQDWKSKWYSEKKKYTQTLHEDIKIRKFIEERYKQAGISSVLIERLGDRMRVKIMAARPGIVIGAKGAEVEKLNEIIKKLTSTKEVIVNVDEVKKPELDAKLVAEDIALQLERRVTHRRAMKKAIDSALKAGAKGIKTQVGGRIGGVDLARKEWFMAGRMPLQTLKADIDYGTARASTKYGILGIKVWIYKGDKLEGKAEEVLSRVEEELHTT</sequence>
<gene>
    <name evidence="1" type="primary">rpsC</name>
    <name type="ordered locus">SYO3AOP1_0285</name>
</gene>
<feature type="chain" id="PRO_1000141024" description="Small ribosomal subunit protein uS3">
    <location>
        <begin position="1"/>
        <end position="227"/>
    </location>
</feature>
<feature type="domain" description="KH type-2" evidence="1">
    <location>
        <begin position="39"/>
        <end position="108"/>
    </location>
</feature>
<keyword id="KW-0687">Ribonucleoprotein</keyword>
<keyword id="KW-0689">Ribosomal protein</keyword>
<keyword id="KW-0694">RNA-binding</keyword>
<keyword id="KW-0699">rRNA-binding</keyword>
<evidence type="ECO:0000255" key="1">
    <source>
        <dbReference type="HAMAP-Rule" id="MF_01309"/>
    </source>
</evidence>
<evidence type="ECO:0000305" key="2"/>
<accession>B2V7K7</accession>
<proteinExistence type="inferred from homology"/>